<feature type="chain" id="PRO_1000099935" description="Pantothenate kinase">
    <location>
        <begin position="1"/>
        <end position="307"/>
    </location>
</feature>
<feature type="binding site" evidence="1">
    <location>
        <begin position="90"/>
        <end position="97"/>
    </location>
    <ligand>
        <name>ATP</name>
        <dbReference type="ChEBI" id="CHEBI:30616"/>
    </ligand>
</feature>
<organism>
    <name type="scientific">Limosilactobacillus fermentum (strain NBRC 3956 / LMG 18251)</name>
    <name type="common">Lactobacillus fermentum</name>
    <dbReference type="NCBI Taxonomy" id="334390"/>
    <lineage>
        <taxon>Bacteria</taxon>
        <taxon>Bacillati</taxon>
        <taxon>Bacillota</taxon>
        <taxon>Bacilli</taxon>
        <taxon>Lactobacillales</taxon>
        <taxon>Lactobacillaceae</taxon>
        <taxon>Limosilactobacillus</taxon>
    </lineage>
</organism>
<reference key="1">
    <citation type="journal article" date="2008" name="DNA Res.">
        <title>Comparative genome analysis of Lactobacillus reuteri and Lactobacillus fermentum reveal a genomic island for reuterin and cobalamin production.</title>
        <authorList>
            <person name="Morita H."/>
            <person name="Toh H."/>
            <person name="Fukuda S."/>
            <person name="Horikawa H."/>
            <person name="Oshima K."/>
            <person name="Suzuki T."/>
            <person name="Murakami M."/>
            <person name="Hisamatsu S."/>
            <person name="Kato Y."/>
            <person name="Takizawa T."/>
            <person name="Fukuoka H."/>
            <person name="Yoshimura T."/>
            <person name="Itoh K."/>
            <person name="O'Sullivan D.J."/>
            <person name="McKay L.L."/>
            <person name="Ohno H."/>
            <person name="Kikuchi J."/>
            <person name="Masaoka T."/>
            <person name="Hattori M."/>
        </authorList>
    </citation>
    <scope>NUCLEOTIDE SEQUENCE [LARGE SCALE GENOMIC DNA]</scope>
    <source>
        <strain>NBRC 3956 / LMG 18251</strain>
    </source>
</reference>
<gene>
    <name evidence="1" type="primary">coaA</name>
    <name type="ordered locus">LAF_1646</name>
</gene>
<evidence type="ECO:0000255" key="1">
    <source>
        <dbReference type="HAMAP-Rule" id="MF_00215"/>
    </source>
</evidence>
<keyword id="KW-0067">ATP-binding</keyword>
<keyword id="KW-0173">Coenzyme A biosynthesis</keyword>
<keyword id="KW-0963">Cytoplasm</keyword>
<keyword id="KW-0418">Kinase</keyword>
<keyword id="KW-0547">Nucleotide-binding</keyword>
<keyword id="KW-1185">Reference proteome</keyword>
<keyword id="KW-0808">Transferase</keyword>
<dbReference type="EC" id="2.7.1.33" evidence="1"/>
<dbReference type="EMBL" id="AP008937">
    <property type="protein sequence ID" value="BAG27982.1"/>
    <property type="molecule type" value="Genomic_DNA"/>
</dbReference>
<dbReference type="RefSeq" id="WP_003685321.1">
    <property type="nucleotide sequence ID" value="NC_010610.1"/>
</dbReference>
<dbReference type="SMR" id="B2GEA0"/>
<dbReference type="KEGG" id="lfe:LAF_1646"/>
<dbReference type="eggNOG" id="COG1072">
    <property type="taxonomic scope" value="Bacteria"/>
</dbReference>
<dbReference type="HOGENOM" id="CLU_053818_1_1_9"/>
<dbReference type="UniPathway" id="UPA00241">
    <property type="reaction ID" value="UER00352"/>
</dbReference>
<dbReference type="Proteomes" id="UP000001697">
    <property type="component" value="Chromosome"/>
</dbReference>
<dbReference type="GO" id="GO:0005737">
    <property type="term" value="C:cytoplasm"/>
    <property type="evidence" value="ECO:0007669"/>
    <property type="project" value="UniProtKB-SubCell"/>
</dbReference>
<dbReference type="GO" id="GO:0005524">
    <property type="term" value="F:ATP binding"/>
    <property type="evidence" value="ECO:0007669"/>
    <property type="project" value="UniProtKB-UniRule"/>
</dbReference>
<dbReference type="GO" id="GO:0004594">
    <property type="term" value="F:pantothenate kinase activity"/>
    <property type="evidence" value="ECO:0007669"/>
    <property type="project" value="UniProtKB-UniRule"/>
</dbReference>
<dbReference type="GO" id="GO:0015937">
    <property type="term" value="P:coenzyme A biosynthetic process"/>
    <property type="evidence" value="ECO:0007669"/>
    <property type="project" value="UniProtKB-UniRule"/>
</dbReference>
<dbReference type="CDD" id="cd02025">
    <property type="entry name" value="PanK"/>
    <property type="match status" value="1"/>
</dbReference>
<dbReference type="Gene3D" id="3.40.50.300">
    <property type="entry name" value="P-loop containing nucleotide triphosphate hydrolases"/>
    <property type="match status" value="1"/>
</dbReference>
<dbReference type="HAMAP" id="MF_00215">
    <property type="entry name" value="Pantothen_kinase_1"/>
    <property type="match status" value="1"/>
</dbReference>
<dbReference type="InterPro" id="IPR027417">
    <property type="entry name" value="P-loop_NTPase"/>
</dbReference>
<dbReference type="InterPro" id="IPR004566">
    <property type="entry name" value="PanK"/>
</dbReference>
<dbReference type="InterPro" id="IPR006083">
    <property type="entry name" value="PRK/URK"/>
</dbReference>
<dbReference type="NCBIfam" id="TIGR00554">
    <property type="entry name" value="panK_bact"/>
    <property type="match status" value="1"/>
</dbReference>
<dbReference type="PANTHER" id="PTHR10285">
    <property type="entry name" value="URIDINE KINASE"/>
    <property type="match status" value="1"/>
</dbReference>
<dbReference type="Pfam" id="PF00485">
    <property type="entry name" value="PRK"/>
    <property type="match status" value="1"/>
</dbReference>
<dbReference type="PIRSF" id="PIRSF000545">
    <property type="entry name" value="Pantothenate_kin"/>
    <property type="match status" value="1"/>
</dbReference>
<dbReference type="SUPFAM" id="SSF52540">
    <property type="entry name" value="P-loop containing nucleoside triphosphate hydrolases"/>
    <property type="match status" value="1"/>
</dbReference>
<proteinExistence type="inferred from homology"/>
<comment type="catalytic activity">
    <reaction evidence="1">
        <text>(R)-pantothenate + ATP = (R)-4'-phosphopantothenate + ADP + H(+)</text>
        <dbReference type="Rhea" id="RHEA:16373"/>
        <dbReference type="ChEBI" id="CHEBI:10986"/>
        <dbReference type="ChEBI" id="CHEBI:15378"/>
        <dbReference type="ChEBI" id="CHEBI:29032"/>
        <dbReference type="ChEBI" id="CHEBI:30616"/>
        <dbReference type="ChEBI" id="CHEBI:456216"/>
        <dbReference type="EC" id="2.7.1.33"/>
    </reaction>
</comment>
<comment type="pathway">
    <text evidence="1">Cofactor biosynthesis; coenzyme A biosynthesis; CoA from (R)-pantothenate: step 1/5.</text>
</comment>
<comment type="subcellular location">
    <subcellularLocation>
        <location evidence="1">Cytoplasm</location>
    </subcellularLocation>
</comment>
<comment type="similarity">
    <text evidence="1">Belongs to the prokaryotic pantothenate kinase family.</text>
</comment>
<protein>
    <recommendedName>
        <fullName evidence="1">Pantothenate kinase</fullName>
        <ecNumber evidence="1">2.7.1.33</ecNumber>
    </recommendedName>
    <alternativeName>
        <fullName evidence="1">Pantothenic acid kinase</fullName>
    </alternativeName>
</protein>
<name>COAA_LIMF3</name>
<sequence length="307" mass="36279">MDEWINYDQFDRQTWHSFFPSEITFLTQENLDEIKSLNDQISLRDVQDIYLPLIKLIQLQYQNYQQMQLQKMTFLRKSSRRIPYIIGIAGSVAVGKSTTARLLQILLKRLMPDRRIEMITTDGFLYPNAELKRRGIMARKGFPESYDMDRLLTFMNDVNAGEDQVTAPTYSHSVYDVMEDHPQTIYKPDILIVEGINVLQLPTTQRLFVSDFFDFSVYVDADASLVEKWYLERFGMLLDTAFQDPTNYYYPYAQGDRAEAFKMAKQVWKDVDLPNLNDYILPTRTRADVILHKTEHHYIDRVYLRED</sequence>
<accession>B2GEA0</accession>